<protein>
    <recommendedName>
        <fullName evidence="3">Serum amyloid A-4 protein</fullName>
    </recommendedName>
</protein>
<accession>P0DSN9</accession>
<feature type="signal peptide" evidence="4">
    <location>
        <begin position="1"/>
        <end position="18"/>
    </location>
</feature>
<feature type="chain" id="PRO_0000450369" description="Serum amyloid A-4 protein" evidence="4">
    <location>
        <begin position="19"/>
        <end position="128"/>
    </location>
</feature>
<feature type="region of interest" description="Disordered" evidence="5">
    <location>
        <begin position="93"/>
        <end position="128"/>
    </location>
</feature>
<feature type="compositionally biased region" description="Basic and acidic residues" evidence="5">
    <location>
        <begin position="99"/>
        <end position="120"/>
    </location>
</feature>
<evidence type="ECO:0000250" key="1">
    <source>
        <dbReference type="UniProtKB" id="P05366"/>
    </source>
</evidence>
<evidence type="ECO:0000250" key="2">
    <source>
        <dbReference type="UniProtKB" id="P0DJI8"/>
    </source>
</evidence>
<evidence type="ECO:0000250" key="3">
    <source>
        <dbReference type="UniProtKB" id="P35542"/>
    </source>
</evidence>
<evidence type="ECO:0000255" key="4"/>
<evidence type="ECO:0000256" key="5">
    <source>
        <dbReference type="SAM" id="MobiDB-lite"/>
    </source>
</evidence>
<evidence type="ECO:0000305" key="6"/>
<sequence length="128" mass="14591">MKLFIGLIFCSLVMGVSSDGWFSFFKEAVQGASDLWRAYWDMKEANYQNSGRYFRARGNYEAAQRGPGGIWAAKIISNVGEYFQGLLQYLGSSSEREEDQVSNRRAEEWGRSGQDPDHFRPAGLPKKY</sequence>
<comment type="function">
    <text evidence="1">Major acute phase reactant.</text>
</comment>
<comment type="subunit">
    <text evidence="2">Apolipoprotein of the HDL complex.</text>
</comment>
<comment type="subcellular location">
    <subcellularLocation>
        <location evidence="2">Secreted</location>
    </subcellularLocation>
</comment>
<comment type="similarity">
    <text evidence="6">Belongs to the SAA family.</text>
</comment>
<reference key="1">
    <citation type="submission" date="2011-08" db="EMBL/GenBank/DDBJ databases">
        <authorList>
            <consortium name="Porcine genome sequencing project"/>
        </authorList>
    </citation>
    <scope>NUCLEOTIDE SEQUENCE [LARGE SCALE GENOMIC DNA]</scope>
</reference>
<keyword id="KW-1185">Reference proteome</keyword>
<keyword id="KW-0964">Secreted</keyword>
<keyword id="KW-0732">Signal</keyword>
<proteinExistence type="inferred from homology"/>
<gene>
    <name evidence="3" type="primary">SAA4</name>
</gene>
<dbReference type="EMBL" id="CM000813">
    <property type="status" value="NOT_ANNOTATED_CDS"/>
    <property type="molecule type" value="Genomic_DNA"/>
</dbReference>
<dbReference type="RefSeq" id="XP_003122987.1">
    <property type="nucleotide sequence ID" value="XM_003122939.2"/>
</dbReference>
<dbReference type="SMR" id="P0DSN9"/>
<dbReference type="FunCoup" id="P0DSN9">
    <property type="interactions" value="104"/>
</dbReference>
<dbReference type="Ensembl" id="ENSSSCT00025015360.1">
    <property type="protein sequence ID" value="ENSSSCP00025006041.1"/>
    <property type="gene ID" value="ENSSSCG00025011644.1"/>
</dbReference>
<dbReference type="Ensembl" id="ENSSSCT00030084690.1">
    <property type="protein sequence ID" value="ENSSSCP00030038978.1"/>
    <property type="gene ID" value="ENSSSCG00030060625.1"/>
</dbReference>
<dbReference type="Ensembl" id="ENSSSCT00040072871.1">
    <property type="protein sequence ID" value="ENSSSCP00040031154.1"/>
    <property type="gene ID" value="ENSSSCG00040053874.1"/>
</dbReference>
<dbReference type="Ensembl" id="ENSSSCT00055023793.1">
    <property type="protein sequence ID" value="ENSSSCP00055018818.1"/>
    <property type="gene ID" value="ENSSSCG00055012171.1"/>
</dbReference>
<dbReference type="Ensembl" id="ENSSSCT00055023847.1">
    <property type="protein sequence ID" value="ENSSSCP00055018865.1"/>
    <property type="gene ID" value="ENSSSCG00055012171.1"/>
</dbReference>
<dbReference type="Ensembl" id="ENSSSCT00060033008.1">
    <property type="protein sequence ID" value="ENSSSCP00060014155.1"/>
    <property type="gene ID" value="ENSSSCG00060024336.1"/>
</dbReference>
<dbReference type="Ensembl" id="ENSSSCT00070014700.1">
    <property type="protein sequence ID" value="ENSSSCP00070012143.1"/>
    <property type="gene ID" value="ENSSSCG00070007616.1"/>
</dbReference>
<dbReference type="Ensembl" id="ENSSSCT00105029379">
    <property type="protein sequence ID" value="ENSSSCP00105020432"/>
    <property type="gene ID" value="ENSSSCG00105015256"/>
</dbReference>
<dbReference type="Ensembl" id="ENSSSCT00110049424">
    <property type="protein sequence ID" value="ENSSSCP00110034774"/>
    <property type="gene ID" value="ENSSSCG00110025632"/>
</dbReference>
<dbReference type="Ensembl" id="ENSSSCT00115005088">
    <property type="protein sequence ID" value="ENSSSCP00115004725"/>
    <property type="gene ID" value="ENSSSCG00115003039"/>
</dbReference>
<dbReference type="Ensembl" id="ENSSSCT00130053601">
    <property type="protein sequence ID" value="ENSSSCP00130038237"/>
    <property type="gene ID" value="ENSSSCG00130027525"/>
</dbReference>
<dbReference type="InParanoid" id="P0DSN9"/>
<dbReference type="Proteomes" id="UP000008227">
    <property type="component" value="Unplaced"/>
</dbReference>
<dbReference type="Proteomes" id="UP000314985">
    <property type="component" value="Chromosome 2"/>
</dbReference>
<dbReference type="Proteomes" id="UP000694570">
    <property type="component" value="Unplaced"/>
</dbReference>
<dbReference type="Proteomes" id="UP000694571">
    <property type="component" value="Unplaced"/>
</dbReference>
<dbReference type="Proteomes" id="UP000694720">
    <property type="component" value="Unplaced"/>
</dbReference>
<dbReference type="Proteomes" id="UP000694722">
    <property type="component" value="Unplaced"/>
</dbReference>
<dbReference type="Proteomes" id="UP000694723">
    <property type="component" value="Unplaced"/>
</dbReference>
<dbReference type="Proteomes" id="UP000694724">
    <property type="component" value="Unplaced"/>
</dbReference>
<dbReference type="Proteomes" id="UP000694725">
    <property type="component" value="Unplaced"/>
</dbReference>
<dbReference type="Proteomes" id="UP000694726">
    <property type="component" value="Unplaced"/>
</dbReference>
<dbReference type="Proteomes" id="UP000694727">
    <property type="component" value="Unplaced"/>
</dbReference>
<dbReference type="Proteomes" id="UP000694728">
    <property type="component" value="Unplaced"/>
</dbReference>
<dbReference type="GO" id="GO:0005576">
    <property type="term" value="C:extracellular region"/>
    <property type="evidence" value="ECO:0007669"/>
    <property type="project" value="UniProtKB-SubCell"/>
</dbReference>
<dbReference type="FunFam" id="1.10.132.110:FF:000001">
    <property type="entry name" value="Serum amyloid A protein"/>
    <property type="match status" value="1"/>
</dbReference>
<dbReference type="Gene3D" id="1.10.132.110">
    <property type="entry name" value="Serum amyloid A protein"/>
    <property type="match status" value="1"/>
</dbReference>
<dbReference type="InterPro" id="IPR000096">
    <property type="entry name" value="Serum_amyloid_A"/>
</dbReference>
<dbReference type="InterPro" id="IPR052464">
    <property type="entry name" value="Synovial_Prolif_Regulator"/>
</dbReference>
<dbReference type="PANTHER" id="PTHR23424">
    <property type="entry name" value="SERUM AMYLOID A"/>
    <property type="match status" value="1"/>
</dbReference>
<dbReference type="PANTHER" id="PTHR23424:SF29">
    <property type="entry name" value="SERUM AMYLOID A PROTEIN"/>
    <property type="match status" value="1"/>
</dbReference>
<dbReference type="Pfam" id="PF00277">
    <property type="entry name" value="SAA"/>
    <property type="match status" value="1"/>
</dbReference>
<dbReference type="PIRSF" id="PIRSF002472">
    <property type="entry name" value="Serum_amyloid_A"/>
    <property type="match status" value="1"/>
</dbReference>
<dbReference type="PRINTS" id="PR00306">
    <property type="entry name" value="SERUMAMYLOID"/>
</dbReference>
<dbReference type="SMART" id="SM00197">
    <property type="entry name" value="SAA"/>
    <property type="match status" value="1"/>
</dbReference>
<dbReference type="PROSITE" id="PS00992">
    <property type="entry name" value="SAA"/>
    <property type="match status" value="1"/>
</dbReference>
<name>SAA4_PIG</name>
<organism>
    <name type="scientific">Sus scrofa</name>
    <name type="common">Pig</name>
    <dbReference type="NCBI Taxonomy" id="9823"/>
    <lineage>
        <taxon>Eukaryota</taxon>
        <taxon>Metazoa</taxon>
        <taxon>Chordata</taxon>
        <taxon>Craniata</taxon>
        <taxon>Vertebrata</taxon>
        <taxon>Euteleostomi</taxon>
        <taxon>Mammalia</taxon>
        <taxon>Eutheria</taxon>
        <taxon>Laurasiatheria</taxon>
        <taxon>Artiodactyla</taxon>
        <taxon>Suina</taxon>
        <taxon>Suidae</taxon>
        <taxon>Sus</taxon>
    </lineage>
</organism>